<gene>
    <name evidence="3" type="primary">xanE</name>
    <name type="ORF">AFUA_5G02640</name>
</gene>
<sequence length="431" mass="47750">MSTQHGPKSTRTNDLYELAVNISSTVEAFVGRLDAIGAERPNLDNPFPEIIQDEGAQLARLKILRLCERLMALVQGPVQWLMFQNMAFLDAACVGAILDMGIHDIIAPGPEPTSLDQIVEATGASKDILKRIMRVCTQRLVFDEIAPEQFIHNGVSLQFLAPPVQALISHACDDGLRMAAHFTDSLKKTDWKGSDDPENTAFSLAFNTNKGLFDYFYTEDLARGQRFALGMAGSEIMKTLTEDMFPFESLPQGAKVVDVGGGRGHVSVRIAEKVPGLNFVVQDDESMLEAGQAEGVPKAVKDRIEFMPHDFFNEQPVKGADVYLLRFILHDHSDSRCAKILSNIVDAMEPGKSRILIDDAIVPSFLGPESSRFFNLLDLYMLAGLNGKERTLEQWNYLIQMVSPKLVLEKVWKTPNGGPESGTILELRLQE</sequence>
<proteinExistence type="inferred from homology"/>
<name>XANE_ASPFU</name>
<comment type="function">
    <text evidence="2">O-methyltransferase; part of the gene cluster that mediates the biosynthesis of the isocyanide xanthocillin and its derivatives (PubMed:29844112). The first step of the pathway consists in the conversion of tyrosine into a vinyl-isonitrile intermediate by the isocyanide synthase xanB (PubMed:29844112). Subsequent oxidative dimerization of this intermediate to form xanthocillin may involve the cytochrome P450 monooxygenase xanG, whose expression is coregulated with that of XanB (PubMed:29844112). Xanthocillin can be further modified by the isonitrile hydratase-like protein xanA which introduces N-formyl groups and the methyltransferase xanE which introduces methyl groups, leading to the production of several derivatives including fumiformamide (PubMed:29844112). Finally, fumiformamide can be subject to both oxidative and reductive cyclization to yield melanocins E and F, respectively (PubMed:29844112).</text>
</comment>
<comment type="pathway">
    <text evidence="5">Secondary metabolite biosynthesis.</text>
</comment>
<comment type="similarity">
    <text evidence="4">Belongs to the class I-like SAM-binding methyltransferase superfamily. Cation-independent O-methyltransferase family.</text>
</comment>
<dbReference type="EC" id="2.1.1.-" evidence="5"/>
<dbReference type="EMBL" id="AAHF01000011">
    <property type="protein sequence ID" value="EAL86040.1"/>
    <property type="molecule type" value="Genomic_DNA"/>
</dbReference>
<dbReference type="RefSeq" id="XP_748078.1">
    <property type="nucleotide sequence ID" value="XM_742985.1"/>
</dbReference>
<dbReference type="SMR" id="Q4WED7"/>
<dbReference type="STRING" id="330879.Q4WED7"/>
<dbReference type="EnsemblFungi" id="EAL86040">
    <property type="protein sequence ID" value="EAL86040"/>
    <property type="gene ID" value="AFUA_5G02640"/>
</dbReference>
<dbReference type="GeneID" id="3505486"/>
<dbReference type="KEGG" id="afm:AFUA_5G02640"/>
<dbReference type="VEuPathDB" id="FungiDB:Afu5g02640"/>
<dbReference type="eggNOG" id="KOG3178">
    <property type="taxonomic scope" value="Eukaryota"/>
</dbReference>
<dbReference type="HOGENOM" id="CLU_005533_1_2_1"/>
<dbReference type="InParanoid" id="Q4WED7"/>
<dbReference type="OMA" id="DYFYTED"/>
<dbReference type="OrthoDB" id="1606438at2759"/>
<dbReference type="Proteomes" id="UP000002530">
    <property type="component" value="Chromosome 5"/>
</dbReference>
<dbReference type="GO" id="GO:0008171">
    <property type="term" value="F:O-methyltransferase activity"/>
    <property type="evidence" value="ECO:0007669"/>
    <property type="project" value="InterPro"/>
</dbReference>
<dbReference type="GO" id="GO:0046983">
    <property type="term" value="F:protein dimerization activity"/>
    <property type="evidence" value="ECO:0007669"/>
    <property type="project" value="InterPro"/>
</dbReference>
<dbReference type="GO" id="GO:0032259">
    <property type="term" value="P:methylation"/>
    <property type="evidence" value="ECO:0007669"/>
    <property type="project" value="UniProtKB-KW"/>
</dbReference>
<dbReference type="GO" id="GO:0044550">
    <property type="term" value="P:secondary metabolite biosynthetic process"/>
    <property type="evidence" value="ECO:0007669"/>
    <property type="project" value="UniProtKB-ARBA"/>
</dbReference>
<dbReference type="Gene3D" id="3.40.50.150">
    <property type="entry name" value="Vaccinia Virus protein VP39"/>
    <property type="match status" value="1"/>
</dbReference>
<dbReference type="Gene3D" id="1.10.10.10">
    <property type="entry name" value="Winged helix-like DNA-binding domain superfamily/Winged helix DNA-binding domain"/>
    <property type="match status" value="1"/>
</dbReference>
<dbReference type="InterPro" id="IPR016461">
    <property type="entry name" value="COMT-like"/>
</dbReference>
<dbReference type="InterPro" id="IPR001077">
    <property type="entry name" value="O_MeTrfase_dom"/>
</dbReference>
<dbReference type="InterPro" id="IPR012967">
    <property type="entry name" value="Plant_O-MeTrfase_dimerisation"/>
</dbReference>
<dbReference type="InterPro" id="IPR029063">
    <property type="entry name" value="SAM-dependent_MTases_sf"/>
</dbReference>
<dbReference type="InterPro" id="IPR036388">
    <property type="entry name" value="WH-like_DNA-bd_sf"/>
</dbReference>
<dbReference type="InterPro" id="IPR036390">
    <property type="entry name" value="WH_DNA-bd_sf"/>
</dbReference>
<dbReference type="PANTHER" id="PTHR43712:SF5">
    <property type="entry name" value="O-METHYLTRANSFERASE ASQN-RELATED"/>
    <property type="match status" value="1"/>
</dbReference>
<dbReference type="PANTHER" id="PTHR43712">
    <property type="entry name" value="PUTATIVE (AFU_ORTHOLOGUE AFUA_4G14580)-RELATED"/>
    <property type="match status" value="1"/>
</dbReference>
<dbReference type="Pfam" id="PF08100">
    <property type="entry name" value="Dimerisation"/>
    <property type="match status" value="1"/>
</dbReference>
<dbReference type="Pfam" id="PF00891">
    <property type="entry name" value="Methyltransf_2"/>
    <property type="match status" value="1"/>
</dbReference>
<dbReference type="SUPFAM" id="SSF53335">
    <property type="entry name" value="S-adenosyl-L-methionine-dependent methyltransferases"/>
    <property type="match status" value="1"/>
</dbReference>
<dbReference type="SUPFAM" id="SSF46785">
    <property type="entry name" value="Winged helix' DNA-binding domain"/>
    <property type="match status" value="1"/>
</dbReference>
<dbReference type="PROSITE" id="PS51683">
    <property type="entry name" value="SAM_OMT_II"/>
    <property type="match status" value="1"/>
</dbReference>
<protein>
    <recommendedName>
        <fullName evidence="3">O-methyltransferase xanE</fullName>
        <ecNumber evidence="5">2.1.1.-</ecNumber>
    </recommendedName>
    <alternativeName>
        <fullName evidence="3">Xanthocillin biosynthesis cluster protein E</fullName>
    </alternativeName>
</protein>
<accession>Q4WED7</accession>
<evidence type="ECO:0000255" key="1">
    <source>
        <dbReference type="PROSITE-ProRule" id="PRU01020"/>
    </source>
</evidence>
<evidence type="ECO:0000269" key="2">
    <source>
    </source>
</evidence>
<evidence type="ECO:0000303" key="3">
    <source>
    </source>
</evidence>
<evidence type="ECO:0000305" key="4"/>
<evidence type="ECO:0000305" key="5">
    <source>
    </source>
</evidence>
<reference key="1">
    <citation type="journal article" date="2005" name="Nature">
        <title>Genomic sequence of the pathogenic and allergenic filamentous fungus Aspergillus fumigatus.</title>
        <authorList>
            <person name="Nierman W.C."/>
            <person name="Pain A."/>
            <person name="Anderson M.J."/>
            <person name="Wortman J.R."/>
            <person name="Kim H.S."/>
            <person name="Arroyo J."/>
            <person name="Berriman M."/>
            <person name="Abe K."/>
            <person name="Archer D.B."/>
            <person name="Bermejo C."/>
            <person name="Bennett J.W."/>
            <person name="Bowyer P."/>
            <person name="Chen D."/>
            <person name="Collins M."/>
            <person name="Coulsen R."/>
            <person name="Davies R."/>
            <person name="Dyer P.S."/>
            <person name="Farman M.L."/>
            <person name="Fedorova N."/>
            <person name="Fedorova N.D."/>
            <person name="Feldblyum T.V."/>
            <person name="Fischer R."/>
            <person name="Fosker N."/>
            <person name="Fraser A."/>
            <person name="Garcia J.L."/>
            <person name="Garcia M.J."/>
            <person name="Goble A."/>
            <person name="Goldman G.H."/>
            <person name="Gomi K."/>
            <person name="Griffith-Jones S."/>
            <person name="Gwilliam R."/>
            <person name="Haas B.J."/>
            <person name="Haas H."/>
            <person name="Harris D.E."/>
            <person name="Horiuchi H."/>
            <person name="Huang J."/>
            <person name="Humphray S."/>
            <person name="Jimenez J."/>
            <person name="Keller N."/>
            <person name="Khouri H."/>
            <person name="Kitamoto K."/>
            <person name="Kobayashi T."/>
            <person name="Konzack S."/>
            <person name="Kulkarni R."/>
            <person name="Kumagai T."/>
            <person name="Lafton A."/>
            <person name="Latge J.-P."/>
            <person name="Li W."/>
            <person name="Lord A."/>
            <person name="Lu C."/>
            <person name="Majoros W.H."/>
            <person name="May G.S."/>
            <person name="Miller B.L."/>
            <person name="Mohamoud Y."/>
            <person name="Molina M."/>
            <person name="Monod M."/>
            <person name="Mouyna I."/>
            <person name="Mulligan S."/>
            <person name="Murphy L.D."/>
            <person name="O'Neil S."/>
            <person name="Paulsen I."/>
            <person name="Penalva M.A."/>
            <person name="Pertea M."/>
            <person name="Price C."/>
            <person name="Pritchard B.L."/>
            <person name="Quail M.A."/>
            <person name="Rabbinowitsch E."/>
            <person name="Rawlins N."/>
            <person name="Rajandream M.A."/>
            <person name="Reichard U."/>
            <person name="Renauld H."/>
            <person name="Robson G.D."/>
            <person name="Rodriguez de Cordoba S."/>
            <person name="Rodriguez-Pena J.M."/>
            <person name="Ronning C.M."/>
            <person name="Rutter S."/>
            <person name="Salzberg S.L."/>
            <person name="Sanchez M."/>
            <person name="Sanchez-Ferrero J.C."/>
            <person name="Saunders D."/>
            <person name="Seeger K."/>
            <person name="Squares R."/>
            <person name="Squares S."/>
            <person name="Takeuchi M."/>
            <person name="Tekaia F."/>
            <person name="Turner G."/>
            <person name="Vazquez de Aldana C.R."/>
            <person name="Weidman J."/>
            <person name="White O."/>
            <person name="Woodward J.R."/>
            <person name="Yu J.-H."/>
            <person name="Fraser C.M."/>
            <person name="Galagan J.E."/>
            <person name="Asai K."/>
            <person name="Machida M."/>
            <person name="Hall N."/>
            <person name="Barrell B.G."/>
            <person name="Denning D.W."/>
        </authorList>
    </citation>
    <scope>NUCLEOTIDE SEQUENCE [LARGE SCALE GENOMIC DNA]</scope>
    <source>
        <strain>ATCC MYA-4609 / CBS 101355 / FGSC A1100 / Af293</strain>
    </source>
</reference>
<reference key="2">
    <citation type="journal article" date="2018" name="MBio">
        <title>Fungal isocyanide synthases and xanthocillin biosynthesis in Aspergillus fumigatus.</title>
        <authorList>
            <person name="Lim F.Y."/>
            <person name="Won T.H."/>
            <person name="Raffa N."/>
            <person name="Baccile J.A."/>
            <person name="Wisecaver J."/>
            <person name="Rokas A."/>
            <person name="Schroeder F.C."/>
            <person name="Keller N.P."/>
        </authorList>
    </citation>
    <scope>FUNCTION</scope>
    <scope>PATHWAY</scope>
</reference>
<keyword id="KW-0489">Methyltransferase</keyword>
<keyword id="KW-1185">Reference proteome</keyword>
<keyword id="KW-0949">S-adenosyl-L-methionine</keyword>
<keyword id="KW-0808">Transferase</keyword>
<organism>
    <name type="scientific">Aspergillus fumigatus (strain ATCC MYA-4609 / CBS 101355 / FGSC A1100 / Af293)</name>
    <name type="common">Neosartorya fumigata</name>
    <dbReference type="NCBI Taxonomy" id="330879"/>
    <lineage>
        <taxon>Eukaryota</taxon>
        <taxon>Fungi</taxon>
        <taxon>Dikarya</taxon>
        <taxon>Ascomycota</taxon>
        <taxon>Pezizomycotina</taxon>
        <taxon>Eurotiomycetes</taxon>
        <taxon>Eurotiomycetidae</taxon>
        <taxon>Eurotiales</taxon>
        <taxon>Aspergillaceae</taxon>
        <taxon>Aspergillus</taxon>
        <taxon>Aspergillus subgen. Fumigati</taxon>
    </lineage>
</organism>
<feature type="chain" id="PRO_0000445297" description="O-methyltransferase xanE">
    <location>
        <begin position="1"/>
        <end position="431"/>
    </location>
</feature>
<feature type="active site" description="Proton acceptor" evidence="1">
    <location>
        <position position="330"/>
    </location>
</feature>
<feature type="binding site" evidence="1">
    <location>
        <position position="283"/>
    </location>
    <ligand>
        <name>S-adenosyl-L-methionine</name>
        <dbReference type="ChEBI" id="CHEBI:59789"/>
    </ligand>
</feature>